<comment type="function">
    <text evidence="1">This protein binds to the 23S rRNA, and is important in its secondary structure. It is located near the subunit interface in the base of the L7/L12 stalk, and near the tRNA binding site of the peptidyltransferase center.</text>
</comment>
<comment type="subunit">
    <text evidence="1">Part of the 50S ribosomal subunit.</text>
</comment>
<comment type="similarity">
    <text evidence="1">Belongs to the universal ribosomal protein uL6 family.</text>
</comment>
<proteinExistence type="inferred from homology"/>
<sequence length="177" mass="19258">MSRVGKNPVSVPANVEVRLSGSEVEVKGPLGMLRHELVSDISIERKGESLLVKAADDSKHANAMWGTTRALLANMVKGVTTGFEKRLILVGVGYRAQAADNVLNLTLGFSHPIAHKMPEGIKVETPSQTEVVIKGMDKQQVGQVAADVRAYREPEPYKGKGVRYADEVIVLKETKKK</sequence>
<name>RL6_NITMU</name>
<keyword id="KW-1185">Reference proteome</keyword>
<keyword id="KW-0687">Ribonucleoprotein</keyword>
<keyword id="KW-0689">Ribosomal protein</keyword>
<keyword id="KW-0694">RNA-binding</keyword>
<keyword id="KW-0699">rRNA-binding</keyword>
<protein>
    <recommendedName>
        <fullName evidence="1">Large ribosomal subunit protein uL6</fullName>
    </recommendedName>
    <alternativeName>
        <fullName evidence="2">50S ribosomal protein L6</fullName>
    </alternativeName>
</protein>
<evidence type="ECO:0000255" key="1">
    <source>
        <dbReference type="HAMAP-Rule" id="MF_01365"/>
    </source>
</evidence>
<evidence type="ECO:0000305" key="2"/>
<accession>Q2YAY2</accession>
<reference key="1">
    <citation type="submission" date="2005-08" db="EMBL/GenBank/DDBJ databases">
        <title>Complete sequence of chromosome 1 of Nitrosospira multiformis ATCC 25196.</title>
        <authorList>
            <person name="Copeland A."/>
            <person name="Lucas S."/>
            <person name="Lapidus A."/>
            <person name="Barry K."/>
            <person name="Detter J.C."/>
            <person name="Glavina T."/>
            <person name="Hammon N."/>
            <person name="Israni S."/>
            <person name="Pitluck S."/>
            <person name="Chain P."/>
            <person name="Malfatti S."/>
            <person name="Shin M."/>
            <person name="Vergez L."/>
            <person name="Schmutz J."/>
            <person name="Larimer F."/>
            <person name="Land M."/>
            <person name="Hauser L."/>
            <person name="Kyrpides N."/>
            <person name="Lykidis A."/>
            <person name="Richardson P."/>
        </authorList>
    </citation>
    <scope>NUCLEOTIDE SEQUENCE [LARGE SCALE GENOMIC DNA]</scope>
    <source>
        <strain>ATCC 25196 / NCIMB 11849 / C 71</strain>
    </source>
</reference>
<gene>
    <name evidence="1" type="primary">rplF</name>
    <name type="ordered locus">Nmul_A0782</name>
</gene>
<dbReference type="EMBL" id="CP000103">
    <property type="protein sequence ID" value="ABB74089.1"/>
    <property type="molecule type" value="Genomic_DNA"/>
</dbReference>
<dbReference type="RefSeq" id="WP_011380138.1">
    <property type="nucleotide sequence ID" value="NC_007614.1"/>
</dbReference>
<dbReference type="SMR" id="Q2YAY2"/>
<dbReference type="STRING" id="323848.Nmul_A0782"/>
<dbReference type="KEGG" id="nmu:Nmul_A0782"/>
<dbReference type="eggNOG" id="COG0097">
    <property type="taxonomic scope" value="Bacteria"/>
</dbReference>
<dbReference type="HOGENOM" id="CLU_065464_1_2_4"/>
<dbReference type="OrthoDB" id="9805007at2"/>
<dbReference type="Proteomes" id="UP000002718">
    <property type="component" value="Chromosome"/>
</dbReference>
<dbReference type="GO" id="GO:0022625">
    <property type="term" value="C:cytosolic large ribosomal subunit"/>
    <property type="evidence" value="ECO:0007669"/>
    <property type="project" value="TreeGrafter"/>
</dbReference>
<dbReference type="GO" id="GO:0019843">
    <property type="term" value="F:rRNA binding"/>
    <property type="evidence" value="ECO:0007669"/>
    <property type="project" value="UniProtKB-UniRule"/>
</dbReference>
<dbReference type="GO" id="GO:0003735">
    <property type="term" value="F:structural constituent of ribosome"/>
    <property type="evidence" value="ECO:0007669"/>
    <property type="project" value="InterPro"/>
</dbReference>
<dbReference type="GO" id="GO:0002181">
    <property type="term" value="P:cytoplasmic translation"/>
    <property type="evidence" value="ECO:0007669"/>
    <property type="project" value="TreeGrafter"/>
</dbReference>
<dbReference type="FunFam" id="3.90.930.12:FF:000001">
    <property type="entry name" value="50S ribosomal protein L6"/>
    <property type="match status" value="1"/>
</dbReference>
<dbReference type="FunFam" id="3.90.930.12:FF:000002">
    <property type="entry name" value="50S ribosomal protein L6"/>
    <property type="match status" value="1"/>
</dbReference>
<dbReference type="Gene3D" id="3.90.930.12">
    <property type="entry name" value="Ribosomal protein L6, alpha-beta domain"/>
    <property type="match status" value="2"/>
</dbReference>
<dbReference type="HAMAP" id="MF_01365_B">
    <property type="entry name" value="Ribosomal_uL6_B"/>
    <property type="match status" value="1"/>
</dbReference>
<dbReference type="InterPro" id="IPR000702">
    <property type="entry name" value="Ribosomal_uL6-like"/>
</dbReference>
<dbReference type="InterPro" id="IPR036789">
    <property type="entry name" value="Ribosomal_uL6-like_a/b-dom_sf"/>
</dbReference>
<dbReference type="InterPro" id="IPR020040">
    <property type="entry name" value="Ribosomal_uL6_a/b-dom"/>
</dbReference>
<dbReference type="InterPro" id="IPR019906">
    <property type="entry name" value="Ribosomal_uL6_bac-type"/>
</dbReference>
<dbReference type="InterPro" id="IPR002358">
    <property type="entry name" value="Ribosomal_uL6_CS"/>
</dbReference>
<dbReference type="NCBIfam" id="TIGR03654">
    <property type="entry name" value="L6_bact"/>
    <property type="match status" value="1"/>
</dbReference>
<dbReference type="PANTHER" id="PTHR11655">
    <property type="entry name" value="60S/50S RIBOSOMAL PROTEIN L6/L9"/>
    <property type="match status" value="1"/>
</dbReference>
<dbReference type="PANTHER" id="PTHR11655:SF14">
    <property type="entry name" value="LARGE RIBOSOMAL SUBUNIT PROTEIN UL6M"/>
    <property type="match status" value="1"/>
</dbReference>
<dbReference type="Pfam" id="PF00347">
    <property type="entry name" value="Ribosomal_L6"/>
    <property type="match status" value="2"/>
</dbReference>
<dbReference type="PIRSF" id="PIRSF002162">
    <property type="entry name" value="Ribosomal_L6"/>
    <property type="match status" value="1"/>
</dbReference>
<dbReference type="PRINTS" id="PR00059">
    <property type="entry name" value="RIBOSOMALL6"/>
</dbReference>
<dbReference type="SUPFAM" id="SSF56053">
    <property type="entry name" value="Ribosomal protein L6"/>
    <property type="match status" value="2"/>
</dbReference>
<dbReference type="PROSITE" id="PS00525">
    <property type="entry name" value="RIBOSOMAL_L6_1"/>
    <property type="match status" value="1"/>
</dbReference>
<organism>
    <name type="scientific">Nitrosospira multiformis (strain ATCC 25196 / NCIMB 11849 / C 71)</name>
    <dbReference type="NCBI Taxonomy" id="323848"/>
    <lineage>
        <taxon>Bacteria</taxon>
        <taxon>Pseudomonadati</taxon>
        <taxon>Pseudomonadota</taxon>
        <taxon>Betaproteobacteria</taxon>
        <taxon>Nitrosomonadales</taxon>
        <taxon>Nitrosomonadaceae</taxon>
        <taxon>Nitrosospira</taxon>
    </lineage>
</organism>
<feature type="chain" id="PRO_0000260905" description="Large ribosomal subunit protein uL6">
    <location>
        <begin position="1"/>
        <end position="177"/>
    </location>
</feature>